<organism>
    <name type="scientific">Klebsiella pneumoniae</name>
    <dbReference type="NCBI Taxonomy" id="573"/>
    <lineage>
        <taxon>Bacteria</taxon>
        <taxon>Pseudomonadati</taxon>
        <taxon>Pseudomonadota</taxon>
        <taxon>Gammaproteobacteria</taxon>
        <taxon>Enterobacterales</taxon>
        <taxon>Enterobacteriaceae</taxon>
        <taxon>Klebsiella/Raoultella group</taxon>
        <taxon>Klebsiella</taxon>
        <taxon>Klebsiella pneumoniae complex</taxon>
    </lineage>
</organism>
<proteinExistence type="inferred from homology"/>
<evidence type="ECO:0000250" key="1">
    <source>
        <dbReference type="UniProtKB" id="Q00516"/>
    </source>
</evidence>
<evidence type="ECO:0000255" key="2"/>
<evidence type="ECO:0000255" key="3">
    <source>
        <dbReference type="PROSITE-ProRule" id="PRU01070"/>
    </source>
</evidence>
<evidence type="ECO:0000305" key="4"/>
<protein>
    <recommendedName>
        <fullName>Type II secretion system protein I</fullName>
        <shortName>T2SS minor pseudopilin I</shortName>
    </recommendedName>
    <alternativeName>
        <fullName>General secretion pathway protein I</fullName>
    </alternativeName>
    <alternativeName>
        <fullName>Pullulanase secretion protein PulI</fullName>
    </alternativeName>
</protein>
<name>GSPI_KLEPN</name>
<accession>P15748</accession>
<comment type="function">
    <text evidence="1">Component of the type II secretion system required for the energy-dependent secretion of extracellular factors such as proteases and toxins from the periplasm. Part of the pseudopilus tip complex that is critical for the recognition and binding of secretion substrates.</text>
</comment>
<comment type="subunit">
    <text evidence="1">Type II secretion is composed of four main components: the outer membrane complex, the inner membrane complex, the cytoplasmic secretion ATPase and the periplasm-spanning pseudopilus. Interacts with core component PulG.</text>
</comment>
<comment type="subcellular location">
    <subcellularLocation>
        <location evidence="1">Cell inner membrane</location>
        <topology evidence="2">Single-pass membrane protein</topology>
    </subcellularLocation>
</comment>
<comment type="PTM">
    <text evidence="1">Cleaved by prepilin peptidase.</text>
</comment>
<comment type="PTM">
    <text evidence="1">Methylated by prepilin peptidase at the amino group of the N-terminal methionine once the leader sequence is cleaved by prepilin peptidase.</text>
</comment>
<comment type="similarity">
    <text evidence="4">Belongs to the GSP I family.</text>
</comment>
<gene>
    <name type="primary">pulI</name>
</gene>
<feature type="propeptide" id="PRO_0000024238" description="Leader sequence" evidence="3">
    <location>
        <begin position="1"/>
        <end position="6"/>
    </location>
</feature>
<feature type="chain" id="PRO_0000024239" description="Type II secretion system protein I">
    <location>
        <begin position="7"/>
        <end position="121"/>
    </location>
</feature>
<feature type="transmembrane region" description="Helical" evidence="2">
    <location>
        <begin position="7"/>
        <end position="27"/>
    </location>
</feature>
<feature type="modified residue" description="N-methylmethionine" evidence="3">
    <location>
        <position position="7"/>
    </location>
</feature>
<dbReference type="EMBL" id="M32613">
    <property type="protein sequence ID" value="AAA25131.1"/>
    <property type="molecule type" value="Genomic_DNA"/>
</dbReference>
<dbReference type="SMR" id="P15748"/>
<dbReference type="TCDB" id="3.A.15.1.1">
    <property type="family name" value="the outer membrane protein secreting main terminal branch (mtb) family"/>
</dbReference>
<dbReference type="GO" id="GO:0005886">
    <property type="term" value="C:plasma membrane"/>
    <property type="evidence" value="ECO:0007669"/>
    <property type="project" value="UniProtKB-SubCell"/>
</dbReference>
<dbReference type="GO" id="GO:0015627">
    <property type="term" value="C:type II protein secretion system complex"/>
    <property type="evidence" value="ECO:0007669"/>
    <property type="project" value="InterPro"/>
</dbReference>
<dbReference type="GO" id="GO:0015628">
    <property type="term" value="P:protein secretion by the type II secretion system"/>
    <property type="evidence" value="ECO:0007669"/>
    <property type="project" value="InterPro"/>
</dbReference>
<dbReference type="Gene3D" id="3.30.1300.30">
    <property type="entry name" value="GSPII I/J protein-like"/>
    <property type="match status" value="1"/>
</dbReference>
<dbReference type="InterPro" id="IPR012902">
    <property type="entry name" value="N_methyl_site"/>
</dbReference>
<dbReference type="InterPro" id="IPR045584">
    <property type="entry name" value="Pilin-like"/>
</dbReference>
<dbReference type="InterPro" id="IPR003413">
    <property type="entry name" value="T2SS_GspI_C"/>
</dbReference>
<dbReference type="InterPro" id="IPR010052">
    <property type="entry name" value="T2SS_protein-GspI"/>
</dbReference>
<dbReference type="NCBIfam" id="TIGR01707">
    <property type="entry name" value="gspI"/>
    <property type="match status" value="1"/>
</dbReference>
<dbReference type="NCBIfam" id="TIGR02532">
    <property type="entry name" value="IV_pilin_GFxxxE"/>
    <property type="match status" value="1"/>
</dbReference>
<dbReference type="PANTHER" id="PTHR38779">
    <property type="entry name" value="TYPE II SECRETION SYSTEM PROTEIN I-RELATED"/>
    <property type="match status" value="1"/>
</dbReference>
<dbReference type="PANTHER" id="PTHR38779:SF2">
    <property type="entry name" value="TYPE II SECRETION SYSTEM PROTEIN I-RELATED"/>
    <property type="match status" value="1"/>
</dbReference>
<dbReference type="Pfam" id="PF07963">
    <property type="entry name" value="N_methyl"/>
    <property type="match status" value="1"/>
</dbReference>
<dbReference type="Pfam" id="PF02501">
    <property type="entry name" value="T2SSI"/>
    <property type="match status" value="1"/>
</dbReference>
<dbReference type="SUPFAM" id="SSF54523">
    <property type="entry name" value="Pili subunits"/>
    <property type="match status" value="1"/>
</dbReference>
<dbReference type="PROSITE" id="PS00409">
    <property type="entry name" value="PROKAR_NTER_METHYL"/>
    <property type="match status" value="1"/>
</dbReference>
<sequence>MKKQSGMTLIEVMVALVVFALAGLAVMQATLQQTRQLGRMEEKTLASWLADNQLVQLRLENRWPALSWSETTLQAAGVSWHIRWQGVETDLPQLRALDVEVRHAKSDKTPVSSLRTYVTSP</sequence>
<keyword id="KW-0997">Cell inner membrane</keyword>
<keyword id="KW-1003">Cell membrane</keyword>
<keyword id="KW-0472">Membrane</keyword>
<keyword id="KW-0488">Methylation</keyword>
<keyword id="KW-0653">Protein transport</keyword>
<keyword id="KW-0812">Transmembrane</keyword>
<keyword id="KW-1133">Transmembrane helix</keyword>
<keyword id="KW-0813">Transport</keyword>
<reference key="1">
    <citation type="journal article" date="1990" name="Mol. Gen. Genet.">
        <title>Five additional genes in the pulC-O operon of the Gram-negative bacterium Klebsiella oxytoca UNF5023 which are required for pullulanase secretion.</title>
        <authorList>
            <person name="Reyss I."/>
            <person name="Pugsley A.P."/>
        </authorList>
    </citation>
    <scope>NUCLEOTIDE SEQUENCE [GENOMIC DNA]</scope>
    <source>
        <strain>UNF 5023</strain>
    </source>
</reference>